<organism>
    <name type="scientific">Pseudoalteromonas translucida (strain TAC 125)</name>
    <dbReference type="NCBI Taxonomy" id="326442"/>
    <lineage>
        <taxon>Bacteria</taxon>
        <taxon>Pseudomonadati</taxon>
        <taxon>Pseudomonadota</taxon>
        <taxon>Gammaproteobacteria</taxon>
        <taxon>Alteromonadales</taxon>
        <taxon>Pseudoalteromonadaceae</taxon>
        <taxon>Pseudoalteromonas</taxon>
    </lineage>
</organism>
<feature type="chain" id="PRO_0000264586" description="Phosphoribosylformylglycinamidine synthase">
    <location>
        <begin position="1"/>
        <end position="1296"/>
    </location>
</feature>
<feature type="domain" description="Glutamine amidotransferase type-1" evidence="1">
    <location>
        <begin position="1043"/>
        <end position="1296"/>
    </location>
</feature>
<feature type="region of interest" description="Disordered" evidence="2">
    <location>
        <begin position="300"/>
        <end position="325"/>
    </location>
</feature>
<feature type="region of interest" description="Disordered" evidence="2">
    <location>
        <begin position="1232"/>
        <end position="1253"/>
    </location>
</feature>
<feature type="active site" description="Nucleophile" evidence="1">
    <location>
        <position position="1136"/>
    </location>
</feature>
<feature type="active site" evidence="1">
    <location>
        <position position="1261"/>
    </location>
</feature>
<feature type="active site" evidence="1">
    <location>
        <position position="1263"/>
    </location>
</feature>
<feature type="binding site" evidence="1">
    <location>
        <begin position="304"/>
        <end position="315"/>
    </location>
    <ligand>
        <name>ATP</name>
        <dbReference type="ChEBI" id="CHEBI:30616"/>
    </ligand>
</feature>
<feature type="binding site" evidence="1">
    <location>
        <position position="675"/>
    </location>
    <ligand>
        <name>ATP</name>
        <dbReference type="ChEBI" id="CHEBI:30616"/>
    </ligand>
</feature>
<feature type="binding site" evidence="1">
    <location>
        <position position="715"/>
    </location>
    <ligand>
        <name>Mg(2+)</name>
        <dbReference type="ChEBI" id="CHEBI:18420"/>
    </ligand>
</feature>
<feature type="binding site" evidence="1">
    <location>
        <position position="719"/>
    </location>
    <ligand>
        <name>Mg(2+)</name>
        <dbReference type="ChEBI" id="CHEBI:18420"/>
    </ligand>
</feature>
<feature type="binding site" evidence="1">
    <location>
        <position position="885"/>
    </location>
    <ligand>
        <name>Mg(2+)</name>
        <dbReference type="ChEBI" id="CHEBI:18420"/>
    </ligand>
</feature>
<feature type="binding site" evidence="1">
    <location>
        <position position="887"/>
    </location>
    <ligand>
        <name>ATP</name>
        <dbReference type="ChEBI" id="CHEBI:30616"/>
    </ligand>
</feature>
<sequence>MLILRGAPALSEFRVNKILARCQQSQLPVTNVYAEYAHFADLTSPLSSAEQTKLEKLLTYGPTIAEHTPAGKLVLVTPRPGTISPWASKATDIAHNCGLKQVHRVERGIAYYVEGELNAEQLLQVTALLHDRMTEATHSQFEDAAQLFRSDAPRQMSSVDILSGGREALAIANVEQGFALADDEIDYLVENFIKLGRNPNDIELFMFAQANSEHCRHKIFNADWTIDGEEQPKSLFKMIKNTFEKNPENVLSAYKDNAAVMKGSKAGRFFPNTQGEYAYHQEDIEILMKVETHNHPTAIAPFSGAATGSGGEIRDEGATGRGSKPKAGLVGFTVSNLRIPGYEQPWESDFGKPGRIVTALDIMTEGPLGGAAFNNEFGRPNLLGYFRTYEEQVTSHNGLEVRGYHKPIMLAGGLGNIRTDHVQKGEIPVGAKLIALGGPAMNIGLGGGAASSMASGQSNEDLDFASVQRENPEMERRCQEVIDKCWQLGDENPIAFIHDVGAGGLSNAFPELVNDGGRGGKFQLRDIPNDEPGMAPHEIWCNESQERYVLAVGVEDFDRFEAICKRERAQYAVIGEATAEPHLTVADSHFDNNPVDLPLDVLLGKAPKMHRDVTSKQVVGKALDVTNINVADAAQRLLRLPTIAEKTFLITIGDRSVTGLVARDQMVGPWQVPVANCAVTAATYDTYHGEAMSLGERTPAALLNYAASARLAVAESLTNIACANIGSLENIKLSANWMAAAGHPGEDAGLYEAVKAIGEELCPALGLTIPVGKDSMSMKTTWKDEGDSQEKSVTSPLSLIITAFGRVDDVRKTVTPQLRTDKGETSLILVDLGAGKNRMGASSLAQVYKQLGDITPDVDSPELLKGFYNAMQVLVADSKLLAYHDRSDGGLFTTVAEMAFAGHTGVTVDINGLTGNDIEALYNEELGAVIQVANSDLDAVNAVLKDHGLATISHIIGTLNSDDAIVFNRGKNTVLSNTRTELRTMWAETTYQMQARRDNPECAKQEFDAKFDVKDPGLNVKLNFDLNEDIAAPYIATGAKPPMAILREQGVNSHLEMAAAFNRAGFAAIDVHMSDILEGRLSLEQFKGLVACGGFSYGDVLGAGEGWAKSILFNDMAREQFQSFFHREDTFSLGVCNGCQMLSTLKELIPGTEHWPRFVTNKSERFEARFSLVEIQENPSVFFNGMAGSRMPIAVSHGEGHAEFANDNAVKAALDSGTVAVKFVDNYGNPTTQYPANPNGSPEGITGITSTDGRATVMMPHPERVFRAVANSWHPDEWREDSPWMRMFRNARKNVG</sequence>
<name>PUR4_PSET1</name>
<reference key="1">
    <citation type="journal article" date="2005" name="Genome Res.">
        <title>Coping with cold: the genome of the versatile marine Antarctica bacterium Pseudoalteromonas haloplanktis TAC125.</title>
        <authorList>
            <person name="Medigue C."/>
            <person name="Krin E."/>
            <person name="Pascal G."/>
            <person name="Barbe V."/>
            <person name="Bernsel A."/>
            <person name="Bertin P.N."/>
            <person name="Cheung F."/>
            <person name="Cruveiller S."/>
            <person name="D'Amico S."/>
            <person name="Duilio A."/>
            <person name="Fang G."/>
            <person name="Feller G."/>
            <person name="Ho C."/>
            <person name="Mangenot S."/>
            <person name="Marino G."/>
            <person name="Nilsson J."/>
            <person name="Parrilli E."/>
            <person name="Rocha E.P.C."/>
            <person name="Rouy Z."/>
            <person name="Sekowska A."/>
            <person name="Tutino M.L."/>
            <person name="Vallenet D."/>
            <person name="von Heijne G."/>
            <person name="Danchin A."/>
        </authorList>
    </citation>
    <scope>NUCLEOTIDE SEQUENCE [LARGE SCALE GENOMIC DNA]</scope>
    <source>
        <strain>TAC 125</strain>
    </source>
</reference>
<comment type="function">
    <text evidence="1">Phosphoribosylformylglycinamidine synthase involved in the purines biosynthetic pathway. Catalyzes the ATP-dependent conversion of formylglycinamide ribonucleotide (FGAR) and glutamine to yield formylglycinamidine ribonucleotide (FGAM) and glutamate.</text>
</comment>
<comment type="catalytic activity">
    <reaction evidence="1">
        <text>N(2)-formyl-N(1)-(5-phospho-beta-D-ribosyl)glycinamide + L-glutamine + ATP + H2O = 2-formamido-N(1)-(5-O-phospho-beta-D-ribosyl)acetamidine + L-glutamate + ADP + phosphate + H(+)</text>
        <dbReference type="Rhea" id="RHEA:17129"/>
        <dbReference type="ChEBI" id="CHEBI:15377"/>
        <dbReference type="ChEBI" id="CHEBI:15378"/>
        <dbReference type="ChEBI" id="CHEBI:29985"/>
        <dbReference type="ChEBI" id="CHEBI:30616"/>
        <dbReference type="ChEBI" id="CHEBI:43474"/>
        <dbReference type="ChEBI" id="CHEBI:58359"/>
        <dbReference type="ChEBI" id="CHEBI:147286"/>
        <dbReference type="ChEBI" id="CHEBI:147287"/>
        <dbReference type="ChEBI" id="CHEBI:456216"/>
        <dbReference type="EC" id="6.3.5.3"/>
    </reaction>
</comment>
<comment type="pathway">
    <text evidence="1">Purine metabolism; IMP biosynthesis via de novo pathway; 5-amino-1-(5-phospho-D-ribosyl)imidazole from N(2)-formyl-N(1)-(5-phospho-D-ribosyl)glycinamide: step 1/2.</text>
</comment>
<comment type="subunit">
    <text evidence="1">Monomer.</text>
</comment>
<comment type="subcellular location">
    <subcellularLocation>
        <location evidence="1">Cytoplasm</location>
    </subcellularLocation>
</comment>
<comment type="similarity">
    <text evidence="1">In the N-terminal section; belongs to the FGAMS family.</text>
</comment>
<evidence type="ECO:0000255" key="1">
    <source>
        <dbReference type="HAMAP-Rule" id="MF_00419"/>
    </source>
</evidence>
<evidence type="ECO:0000256" key="2">
    <source>
        <dbReference type="SAM" id="MobiDB-lite"/>
    </source>
</evidence>
<accession>Q3IHZ2</accession>
<proteinExistence type="inferred from homology"/>
<gene>
    <name evidence="1" type="primary">purL</name>
    <name type="ordered locus">PSHAa2330</name>
</gene>
<keyword id="KW-0067">ATP-binding</keyword>
<keyword id="KW-0963">Cytoplasm</keyword>
<keyword id="KW-0315">Glutamine amidotransferase</keyword>
<keyword id="KW-0436">Ligase</keyword>
<keyword id="KW-0460">Magnesium</keyword>
<keyword id="KW-0479">Metal-binding</keyword>
<keyword id="KW-0547">Nucleotide-binding</keyword>
<keyword id="KW-0658">Purine biosynthesis</keyword>
<keyword id="KW-1185">Reference proteome</keyword>
<protein>
    <recommendedName>
        <fullName evidence="1">Phosphoribosylformylglycinamidine synthase</fullName>
        <shortName evidence="1">FGAM synthase</shortName>
        <shortName evidence="1">FGAMS</shortName>
        <ecNumber evidence="1">6.3.5.3</ecNumber>
    </recommendedName>
    <alternativeName>
        <fullName evidence="1">Formylglycinamide ribonucleotide amidotransferase</fullName>
        <shortName evidence="1">FGAR amidotransferase</shortName>
        <shortName evidence="1">FGAR-AT</shortName>
    </alternativeName>
</protein>
<dbReference type="EC" id="6.3.5.3" evidence="1"/>
<dbReference type="EMBL" id="CR954246">
    <property type="protein sequence ID" value="CAI87386.1"/>
    <property type="molecule type" value="Genomic_DNA"/>
</dbReference>
<dbReference type="SMR" id="Q3IHZ2"/>
<dbReference type="STRING" id="326442.PSHAa2330"/>
<dbReference type="KEGG" id="pha:PSHAa2330"/>
<dbReference type="PATRIC" id="fig|326442.8.peg.2252"/>
<dbReference type="eggNOG" id="COG0046">
    <property type="taxonomic scope" value="Bacteria"/>
</dbReference>
<dbReference type="eggNOG" id="COG0047">
    <property type="taxonomic scope" value="Bacteria"/>
</dbReference>
<dbReference type="HOGENOM" id="CLU_001031_0_2_6"/>
<dbReference type="BioCyc" id="PHAL326442:PSHA_RS11495-MONOMER"/>
<dbReference type="UniPathway" id="UPA00074">
    <property type="reaction ID" value="UER00128"/>
</dbReference>
<dbReference type="Proteomes" id="UP000006843">
    <property type="component" value="Chromosome I"/>
</dbReference>
<dbReference type="GO" id="GO:0005737">
    <property type="term" value="C:cytoplasm"/>
    <property type="evidence" value="ECO:0007669"/>
    <property type="project" value="UniProtKB-SubCell"/>
</dbReference>
<dbReference type="GO" id="GO:0005524">
    <property type="term" value="F:ATP binding"/>
    <property type="evidence" value="ECO:0007669"/>
    <property type="project" value="UniProtKB-UniRule"/>
</dbReference>
<dbReference type="GO" id="GO:0046872">
    <property type="term" value="F:metal ion binding"/>
    <property type="evidence" value="ECO:0007669"/>
    <property type="project" value="UniProtKB-KW"/>
</dbReference>
<dbReference type="GO" id="GO:0004642">
    <property type="term" value="F:phosphoribosylformylglycinamidine synthase activity"/>
    <property type="evidence" value="ECO:0007669"/>
    <property type="project" value="UniProtKB-UniRule"/>
</dbReference>
<dbReference type="GO" id="GO:0006189">
    <property type="term" value="P:'de novo' IMP biosynthetic process"/>
    <property type="evidence" value="ECO:0007669"/>
    <property type="project" value="UniProtKB-UniRule"/>
</dbReference>
<dbReference type="CDD" id="cd01740">
    <property type="entry name" value="GATase1_FGAR_AT"/>
    <property type="match status" value="1"/>
</dbReference>
<dbReference type="CDD" id="cd02203">
    <property type="entry name" value="PurL_repeat1"/>
    <property type="match status" value="1"/>
</dbReference>
<dbReference type="CDD" id="cd02204">
    <property type="entry name" value="PurL_repeat2"/>
    <property type="match status" value="1"/>
</dbReference>
<dbReference type="FunFam" id="1.10.8.750:FF:000002">
    <property type="entry name" value="Phosphoribosylformylglycinamidine synthase"/>
    <property type="match status" value="1"/>
</dbReference>
<dbReference type="FunFam" id="3.30.1330.10:FF:000002">
    <property type="entry name" value="Phosphoribosylformylglycinamidine synthase"/>
    <property type="match status" value="1"/>
</dbReference>
<dbReference type="FunFam" id="3.30.1330.10:FF:000005">
    <property type="entry name" value="Phosphoribosylformylglycinamidine synthase"/>
    <property type="match status" value="1"/>
</dbReference>
<dbReference type="FunFam" id="3.40.50.880:FF:000008">
    <property type="entry name" value="Phosphoribosylformylglycinamidine synthase"/>
    <property type="match status" value="1"/>
</dbReference>
<dbReference type="FunFam" id="3.90.650.10:FF:000002">
    <property type="entry name" value="Phosphoribosylformylglycinamidine synthase"/>
    <property type="match status" value="1"/>
</dbReference>
<dbReference type="FunFam" id="3.90.650.10:FF:000005">
    <property type="entry name" value="Phosphoribosylformylglycinamidine synthase"/>
    <property type="match status" value="1"/>
</dbReference>
<dbReference type="Gene3D" id="3.40.50.880">
    <property type="match status" value="1"/>
</dbReference>
<dbReference type="Gene3D" id="1.10.8.750">
    <property type="entry name" value="Phosphoribosylformylglycinamidine synthase, linker domain"/>
    <property type="match status" value="1"/>
</dbReference>
<dbReference type="Gene3D" id="3.90.650.10">
    <property type="entry name" value="PurM-like C-terminal domain"/>
    <property type="match status" value="2"/>
</dbReference>
<dbReference type="Gene3D" id="3.30.1330.10">
    <property type="entry name" value="PurM-like, N-terminal domain"/>
    <property type="match status" value="2"/>
</dbReference>
<dbReference type="HAMAP" id="MF_00419">
    <property type="entry name" value="PurL_1"/>
    <property type="match status" value="1"/>
</dbReference>
<dbReference type="InterPro" id="IPR029062">
    <property type="entry name" value="Class_I_gatase-like"/>
</dbReference>
<dbReference type="InterPro" id="IPR040707">
    <property type="entry name" value="FGAR-AT_N"/>
</dbReference>
<dbReference type="InterPro" id="IPR055181">
    <property type="entry name" value="FGAR-AT_PurM_N-like"/>
</dbReference>
<dbReference type="InterPro" id="IPR010073">
    <property type="entry name" value="PurL_large"/>
</dbReference>
<dbReference type="InterPro" id="IPR041609">
    <property type="entry name" value="PurL_linker"/>
</dbReference>
<dbReference type="InterPro" id="IPR010918">
    <property type="entry name" value="PurM-like_C_dom"/>
</dbReference>
<dbReference type="InterPro" id="IPR036676">
    <property type="entry name" value="PurM-like_C_sf"/>
</dbReference>
<dbReference type="InterPro" id="IPR036921">
    <property type="entry name" value="PurM-like_N_sf"/>
</dbReference>
<dbReference type="InterPro" id="IPR036604">
    <property type="entry name" value="PurS-like_sf"/>
</dbReference>
<dbReference type="NCBIfam" id="TIGR01735">
    <property type="entry name" value="FGAM_synt"/>
    <property type="match status" value="1"/>
</dbReference>
<dbReference type="NCBIfam" id="NF003672">
    <property type="entry name" value="PRK05297.1"/>
    <property type="match status" value="1"/>
</dbReference>
<dbReference type="PANTHER" id="PTHR10099">
    <property type="entry name" value="PHOSPHORIBOSYLFORMYLGLYCINAMIDINE SYNTHASE"/>
    <property type="match status" value="1"/>
</dbReference>
<dbReference type="PANTHER" id="PTHR10099:SF1">
    <property type="entry name" value="PHOSPHORIBOSYLFORMYLGLYCINAMIDINE SYNTHASE"/>
    <property type="match status" value="1"/>
</dbReference>
<dbReference type="Pfam" id="PF02769">
    <property type="entry name" value="AIRS_C"/>
    <property type="match status" value="2"/>
</dbReference>
<dbReference type="Pfam" id="PF18072">
    <property type="entry name" value="FGAR-AT_linker"/>
    <property type="match status" value="1"/>
</dbReference>
<dbReference type="Pfam" id="PF18076">
    <property type="entry name" value="FGAR-AT_N"/>
    <property type="match status" value="1"/>
</dbReference>
<dbReference type="Pfam" id="PF22689">
    <property type="entry name" value="FGAR-AT_PurM_N-like"/>
    <property type="match status" value="1"/>
</dbReference>
<dbReference type="Pfam" id="PF13507">
    <property type="entry name" value="GATase_5"/>
    <property type="match status" value="1"/>
</dbReference>
<dbReference type="SMART" id="SM01211">
    <property type="entry name" value="GATase_5"/>
    <property type="match status" value="1"/>
</dbReference>
<dbReference type="SUPFAM" id="SSF52317">
    <property type="entry name" value="Class I glutamine amidotransferase-like"/>
    <property type="match status" value="1"/>
</dbReference>
<dbReference type="SUPFAM" id="SSF109736">
    <property type="entry name" value="FGAM synthase PurL, linker domain"/>
    <property type="match status" value="1"/>
</dbReference>
<dbReference type="SUPFAM" id="SSF56042">
    <property type="entry name" value="PurM C-terminal domain-like"/>
    <property type="match status" value="2"/>
</dbReference>
<dbReference type="SUPFAM" id="SSF55326">
    <property type="entry name" value="PurM N-terminal domain-like"/>
    <property type="match status" value="2"/>
</dbReference>
<dbReference type="SUPFAM" id="SSF82697">
    <property type="entry name" value="PurS-like"/>
    <property type="match status" value="1"/>
</dbReference>
<dbReference type="PROSITE" id="PS51273">
    <property type="entry name" value="GATASE_TYPE_1"/>
    <property type="match status" value="1"/>
</dbReference>